<name>TSAD_RHOPA</name>
<gene>
    <name evidence="1" type="primary">tsaD</name>
    <name type="synonym">gcp</name>
    <name type="ordered locus">RPA0255</name>
</gene>
<feature type="chain" id="PRO_0000303516" description="tRNA N6-adenosine threonylcarbamoyltransferase">
    <location>
        <begin position="1"/>
        <end position="363"/>
    </location>
</feature>
<feature type="binding site" evidence="1">
    <location>
        <position position="121"/>
    </location>
    <ligand>
        <name>Fe cation</name>
        <dbReference type="ChEBI" id="CHEBI:24875"/>
    </ligand>
</feature>
<feature type="binding site" evidence="1">
    <location>
        <position position="125"/>
    </location>
    <ligand>
        <name>Fe cation</name>
        <dbReference type="ChEBI" id="CHEBI:24875"/>
    </ligand>
</feature>
<feature type="binding site" evidence="1">
    <location>
        <begin position="143"/>
        <end position="147"/>
    </location>
    <ligand>
        <name>substrate</name>
    </ligand>
</feature>
<feature type="binding site" evidence="1">
    <location>
        <position position="176"/>
    </location>
    <ligand>
        <name>substrate</name>
    </ligand>
</feature>
<feature type="binding site" evidence="1">
    <location>
        <position position="189"/>
    </location>
    <ligand>
        <name>substrate</name>
    </ligand>
</feature>
<feature type="binding site" evidence="1">
    <location>
        <position position="287"/>
    </location>
    <ligand>
        <name>substrate</name>
    </ligand>
</feature>
<feature type="binding site" evidence="1">
    <location>
        <position position="315"/>
    </location>
    <ligand>
        <name>Fe cation</name>
        <dbReference type="ChEBI" id="CHEBI:24875"/>
    </ligand>
</feature>
<keyword id="KW-0012">Acyltransferase</keyword>
<keyword id="KW-0963">Cytoplasm</keyword>
<keyword id="KW-0408">Iron</keyword>
<keyword id="KW-0479">Metal-binding</keyword>
<keyword id="KW-0808">Transferase</keyword>
<keyword id="KW-0819">tRNA processing</keyword>
<dbReference type="EC" id="2.3.1.234" evidence="1"/>
<dbReference type="EMBL" id="BX572593">
    <property type="protein sequence ID" value="CAE25699.1"/>
    <property type="status" value="ALT_INIT"/>
    <property type="molecule type" value="Genomic_DNA"/>
</dbReference>
<dbReference type="SMR" id="Q6ND54"/>
<dbReference type="STRING" id="258594.RPA0255"/>
<dbReference type="eggNOG" id="COG0533">
    <property type="taxonomic scope" value="Bacteria"/>
</dbReference>
<dbReference type="HOGENOM" id="CLU_023208_0_2_5"/>
<dbReference type="GO" id="GO:0005737">
    <property type="term" value="C:cytoplasm"/>
    <property type="evidence" value="ECO:0007669"/>
    <property type="project" value="UniProtKB-SubCell"/>
</dbReference>
<dbReference type="GO" id="GO:0005506">
    <property type="term" value="F:iron ion binding"/>
    <property type="evidence" value="ECO:0007669"/>
    <property type="project" value="UniProtKB-UniRule"/>
</dbReference>
<dbReference type="GO" id="GO:0061711">
    <property type="term" value="F:N(6)-L-threonylcarbamoyladenine synthase activity"/>
    <property type="evidence" value="ECO:0007669"/>
    <property type="project" value="UniProtKB-EC"/>
</dbReference>
<dbReference type="GO" id="GO:0002949">
    <property type="term" value="P:tRNA threonylcarbamoyladenosine modification"/>
    <property type="evidence" value="ECO:0007669"/>
    <property type="project" value="UniProtKB-UniRule"/>
</dbReference>
<dbReference type="CDD" id="cd24133">
    <property type="entry name" value="ASKHA_NBD_TsaD_bac"/>
    <property type="match status" value="1"/>
</dbReference>
<dbReference type="FunFam" id="3.30.420.40:FF:000012">
    <property type="entry name" value="tRNA N6-adenosine threonylcarbamoyltransferase"/>
    <property type="match status" value="1"/>
</dbReference>
<dbReference type="Gene3D" id="3.30.420.40">
    <property type="match status" value="2"/>
</dbReference>
<dbReference type="HAMAP" id="MF_01445">
    <property type="entry name" value="TsaD"/>
    <property type="match status" value="1"/>
</dbReference>
<dbReference type="InterPro" id="IPR043129">
    <property type="entry name" value="ATPase_NBD"/>
</dbReference>
<dbReference type="InterPro" id="IPR000905">
    <property type="entry name" value="Gcp-like_dom"/>
</dbReference>
<dbReference type="InterPro" id="IPR017861">
    <property type="entry name" value="KAE1/TsaD"/>
</dbReference>
<dbReference type="InterPro" id="IPR017860">
    <property type="entry name" value="Peptidase_M22_CS"/>
</dbReference>
<dbReference type="InterPro" id="IPR022450">
    <property type="entry name" value="TsaD"/>
</dbReference>
<dbReference type="NCBIfam" id="TIGR00329">
    <property type="entry name" value="gcp_kae1"/>
    <property type="match status" value="1"/>
</dbReference>
<dbReference type="NCBIfam" id="TIGR03723">
    <property type="entry name" value="T6A_TsaD_YgjD"/>
    <property type="match status" value="1"/>
</dbReference>
<dbReference type="PANTHER" id="PTHR11735">
    <property type="entry name" value="TRNA N6-ADENOSINE THREONYLCARBAMOYLTRANSFERASE"/>
    <property type="match status" value="1"/>
</dbReference>
<dbReference type="PANTHER" id="PTHR11735:SF6">
    <property type="entry name" value="TRNA N6-ADENOSINE THREONYLCARBAMOYLTRANSFERASE, MITOCHONDRIAL"/>
    <property type="match status" value="1"/>
</dbReference>
<dbReference type="Pfam" id="PF00814">
    <property type="entry name" value="TsaD"/>
    <property type="match status" value="1"/>
</dbReference>
<dbReference type="PRINTS" id="PR00789">
    <property type="entry name" value="OSIALOPTASE"/>
</dbReference>
<dbReference type="SUPFAM" id="SSF53067">
    <property type="entry name" value="Actin-like ATPase domain"/>
    <property type="match status" value="2"/>
</dbReference>
<dbReference type="PROSITE" id="PS01016">
    <property type="entry name" value="GLYCOPROTEASE"/>
    <property type="match status" value="1"/>
</dbReference>
<proteinExistence type="inferred from homology"/>
<reference key="1">
    <citation type="journal article" date="2004" name="Nat. Biotechnol.">
        <title>Complete genome sequence of the metabolically versatile photosynthetic bacterium Rhodopseudomonas palustris.</title>
        <authorList>
            <person name="Larimer F.W."/>
            <person name="Chain P."/>
            <person name="Hauser L."/>
            <person name="Lamerdin J.E."/>
            <person name="Malfatti S."/>
            <person name="Do L."/>
            <person name="Land M.L."/>
            <person name="Pelletier D.A."/>
            <person name="Beatty J.T."/>
            <person name="Lang A.S."/>
            <person name="Tabita F.R."/>
            <person name="Gibson J.L."/>
            <person name="Hanson T.E."/>
            <person name="Bobst C."/>
            <person name="Torres y Torres J.L."/>
            <person name="Peres C."/>
            <person name="Harrison F.H."/>
            <person name="Gibson J."/>
            <person name="Harwood C.S."/>
        </authorList>
    </citation>
    <scope>NUCLEOTIDE SEQUENCE [LARGE SCALE GENOMIC DNA]</scope>
    <source>
        <strain>ATCC BAA-98 / CGA009</strain>
    </source>
</reference>
<protein>
    <recommendedName>
        <fullName evidence="1">tRNA N6-adenosine threonylcarbamoyltransferase</fullName>
        <ecNumber evidence="1">2.3.1.234</ecNumber>
    </recommendedName>
    <alternativeName>
        <fullName evidence="1">N6-L-threonylcarbamoyladenine synthase</fullName>
        <shortName evidence="1">t(6)A synthase</shortName>
    </alternativeName>
    <alternativeName>
        <fullName evidence="1">t(6)A37 threonylcarbamoyladenosine biosynthesis protein TsaD</fullName>
    </alternativeName>
    <alternativeName>
        <fullName evidence="1">tRNA threonylcarbamoyladenosine biosynthesis protein TsaD</fullName>
    </alternativeName>
</protein>
<comment type="function">
    <text evidence="1">Required for the formation of a threonylcarbamoyl group on adenosine at position 37 (t(6)A37) in tRNAs that read codons beginning with adenine. Is involved in the transfer of the threonylcarbamoyl moiety of threonylcarbamoyl-AMP (TC-AMP) to the N6 group of A37, together with TsaE and TsaB. TsaD likely plays a direct catalytic role in this reaction.</text>
</comment>
<comment type="catalytic activity">
    <reaction evidence="1">
        <text>L-threonylcarbamoyladenylate + adenosine(37) in tRNA = N(6)-L-threonylcarbamoyladenosine(37) in tRNA + AMP + H(+)</text>
        <dbReference type="Rhea" id="RHEA:37059"/>
        <dbReference type="Rhea" id="RHEA-COMP:10162"/>
        <dbReference type="Rhea" id="RHEA-COMP:10163"/>
        <dbReference type="ChEBI" id="CHEBI:15378"/>
        <dbReference type="ChEBI" id="CHEBI:73682"/>
        <dbReference type="ChEBI" id="CHEBI:74411"/>
        <dbReference type="ChEBI" id="CHEBI:74418"/>
        <dbReference type="ChEBI" id="CHEBI:456215"/>
        <dbReference type="EC" id="2.3.1.234"/>
    </reaction>
</comment>
<comment type="cofactor">
    <cofactor evidence="1">
        <name>Fe(2+)</name>
        <dbReference type="ChEBI" id="CHEBI:29033"/>
    </cofactor>
    <text evidence="1">Binds 1 Fe(2+) ion per subunit.</text>
</comment>
<comment type="subcellular location">
    <subcellularLocation>
        <location evidence="1">Cytoplasm</location>
    </subcellularLocation>
</comment>
<comment type="similarity">
    <text evidence="1">Belongs to the KAE1 / TsaD family.</text>
</comment>
<comment type="sequence caution" evidence="2">
    <conflict type="erroneous initiation">
        <sequence resource="EMBL-CDS" id="CAE25699"/>
    </conflict>
</comment>
<organism>
    <name type="scientific">Rhodopseudomonas palustris (strain ATCC BAA-98 / CGA009)</name>
    <dbReference type="NCBI Taxonomy" id="258594"/>
    <lineage>
        <taxon>Bacteria</taxon>
        <taxon>Pseudomonadati</taxon>
        <taxon>Pseudomonadota</taxon>
        <taxon>Alphaproteobacteria</taxon>
        <taxon>Hyphomicrobiales</taxon>
        <taxon>Nitrobacteraceae</taxon>
        <taxon>Rhodopseudomonas</taxon>
    </lineage>
</organism>
<accession>Q6ND54</accession>
<evidence type="ECO:0000255" key="1">
    <source>
        <dbReference type="HAMAP-Rule" id="MF_01445"/>
    </source>
</evidence>
<evidence type="ECO:0000305" key="2"/>
<sequence length="363" mass="37494">MTSEQALLVLGIETTCDETAAAVVERRADGSGRLLSNIVRSQTDEHAPFGGVVPEIAARAHVDVLDGIIAAAMNEAGVAFASLSGVAAAAGPGLIGGVIVGLTTAKAIALVHGTPLIAVNHLEAHALTPRLTDSVEFPYCLFLASGGHTQIVAVLGVGNYVRLGTTVDDAIGEAFDKIAKMLGLPYPGGPQVERAAEAGDPNRFAFPRPMLGRQDANFSLSGLKTAVRNEAGKLTPLDPQDINDLCAGFQAAVLESVADRLGAGLRLFKERFGPPKALVAAGGAAANQAIRRMLREVAAKVQTTLIVPPPALCTDNGAMIAWAGAERLALGLTDTMDTAPRARWLLDANATAPAKFANTRAGF</sequence>